<comment type="function">
    <text evidence="1">Nucleotidyltransferase involved in the post-translational modification of proteins. It can catalyze the addition of adenosine monophosphate (AMP) or uridine monophosphate (UMP) to a protein, resulting in modifications known as AMPylation and UMPylation.</text>
</comment>
<comment type="catalytic activity">
    <reaction evidence="1">
        <text>L-seryl-[protein] + ATP = 3-O-(5'-adenylyl)-L-seryl-[protein] + diphosphate</text>
        <dbReference type="Rhea" id="RHEA:58120"/>
        <dbReference type="Rhea" id="RHEA-COMP:9863"/>
        <dbReference type="Rhea" id="RHEA-COMP:15073"/>
        <dbReference type="ChEBI" id="CHEBI:29999"/>
        <dbReference type="ChEBI" id="CHEBI:30616"/>
        <dbReference type="ChEBI" id="CHEBI:33019"/>
        <dbReference type="ChEBI" id="CHEBI:142516"/>
        <dbReference type="EC" id="2.7.7.108"/>
    </reaction>
</comment>
<comment type="catalytic activity">
    <reaction evidence="1">
        <text>L-threonyl-[protein] + ATP = 3-O-(5'-adenylyl)-L-threonyl-[protein] + diphosphate</text>
        <dbReference type="Rhea" id="RHEA:54292"/>
        <dbReference type="Rhea" id="RHEA-COMP:11060"/>
        <dbReference type="Rhea" id="RHEA-COMP:13847"/>
        <dbReference type="ChEBI" id="CHEBI:30013"/>
        <dbReference type="ChEBI" id="CHEBI:30616"/>
        <dbReference type="ChEBI" id="CHEBI:33019"/>
        <dbReference type="ChEBI" id="CHEBI:138113"/>
        <dbReference type="EC" id="2.7.7.108"/>
    </reaction>
</comment>
<comment type="catalytic activity">
    <reaction evidence="1">
        <text>L-tyrosyl-[protein] + ATP = O-(5'-adenylyl)-L-tyrosyl-[protein] + diphosphate</text>
        <dbReference type="Rhea" id="RHEA:54288"/>
        <dbReference type="Rhea" id="RHEA-COMP:10136"/>
        <dbReference type="Rhea" id="RHEA-COMP:13846"/>
        <dbReference type="ChEBI" id="CHEBI:30616"/>
        <dbReference type="ChEBI" id="CHEBI:33019"/>
        <dbReference type="ChEBI" id="CHEBI:46858"/>
        <dbReference type="ChEBI" id="CHEBI:83624"/>
        <dbReference type="EC" id="2.7.7.108"/>
    </reaction>
</comment>
<comment type="catalytic activity">
    <reaction evidence="1">
        <text>L-histidyl-[protein] + UTP = N(tele)-(5'-uridylyl)-L-histidyl-[protein] + diphosphate</text>
        <dbReference type="Rhea" id="RHEA:83891"/>
        <dbReference type="Rhea" id="RHEA-COMP:9745"/>
        <dbReference type="Rhea" id="RHEA-COMP:20239"/>
        <dbReference type="ChEBI" id="CHEBI:29979"/>
        <dbReference type="ChEBI" id="CHEBI:33019"/>
        <dbReference type="ChEBI" id="CHEBI:46398"/>
        <dbReference type="ChEBI" id="CHEBI:233474"/>
    </reaction>
</comment>
<comment type="catalytic activity">
    <reaction evidence="1">
        <text>L-seryl-[protein] + UTP = O-(5'-uridylyl)-L-seryl-[protein] + diphosphate</text>
        <dbReference type="Rhea" id="RHEA:64604"/>
        <dbReference type="Rhea" id="RHEA-COMP:9863"/>
        <dbReference type="Rhea" id="RHEA-COMP:16635"/>
        <dbReference type="ChEBI" id="CHEBI:29999"/>
        <dbReference type="ChEBI" id="CHEBI:33019"/>
        <dbReference type="ChEBI" id="CHEBI:46398"/>
        <dbReference type="ChEBI" id="CHEBI:156051"/>
    </reaction>
</comment>
<comment type="catalytic activity">
    <reaction evidence="1">
        <text>L-tyrosyl-[protein] + UTP = O-(5'-uridylyl)-L-tyrosyl-[protein] + diphosphate</text>
        <dbReference type="Rhea" id="RHEA:83887"/>
        <dbReference type="Rhea" id="RHEA-COMP:10136"/>
        <dbReference type="Rhea" id="RHEA-COMP:20238"/>
        <dbReference type="ChEBI" id="CHEBI:33019"/>
        <dbReference type="ChEBI" id="CHEBI:46398"/>
        <dbReference type="ChEBI" id="CHEBI:46858"/>
        <dbReference type="ChEBI" id="CHEBI:90602"/>
    </reaction>
</comment>
<comment type="cofactor">
    <cofactor evidence="1">
        <name>Mg(2+)</name>
        <dbReference type="ChEBI" id="CHEBI:18420"/>
    </cofactor>
    <cofactor evidence="1">
        <name>Mn(2+)</name>
        <dbReference type="ChEBI" id="CHEBI:29035"/>
    </cofactor>
</comment>
<comment type="similarity">
    <text evidence="1">Belongs to the SELO family.</text>
</comment>
<protein>
    <recommendedName>
        <fullName evidence="1">Protein nucleotidyltransferase YdiU</fullName>
        <ecNumber evidence="1">2.7.7.-</ecNumber>
    </recommendedName>
    <alternativeName>
        <fullName evidence="1">Protein adenylyltransferase YdiU</fullName>
        <ecNumber evidence="1">2.7.7.108</ecNumber>
    </alternativeName>
    <alternativeName>
        <fullName evidence="1">Protein uridylyltransferase YdiU</fullName>
        <ecNumber evidence="1">2.7.7.-</ecNumber>
    </alternativeName>
</protein>
<sequence length="484" mass="54253">MKFKQDFFTQLPEFYSQVYPQGITKPEWLAWSDDAAQLIGLSQPTDELLLGLSGNAAVDGATYYAQVYSGHQFGGYTPRLGDGRSIILGEAIGPNGAWDVALKGGGPTPYSRRGDGRAVMRSAVREFLVSEALHHLHVPTTRALAVIGSDLPVWRESQETAAITVRLARSHIRFGHFEFFCHSERGRADKLIQLLNFTITQHYPHLSCDAAGYKAWFLQVVQDTAKMIAHWQAVGFAHGVMNTDNMSILGDSFDFGPFAFLDTFQEDFICNHSDPEGRYAFGQQPGVGLWNLQRLAQALTPVIPSDDLIAILNQYQEALVQPYLRLMRAKLGLSAVDVPSVEQDKQDLDLIGRFTVLMEKNQLDYTQTWRQLGKLDPTSKHSALRDDFIDVSQFDTWYQAYQQRLGAVADIPAWQTERNSVNPKYILRNYLAQEAIIAVEEGNLAPLHLLQKILTQPFAEHAEHEDLAKRPPDWGQGLIMSCSS</sequence>
<name>SELO_SHEB2</name>
<proteinExistence type="inferred from homology"/>
<dbReference type="EC" id="2.7.7.-" evidence="1"/>
<dbReference type="EC" id="2.7.7.108" evidence="1"/>
<dbReference type="EMBL" id="CP001252">
    <property type="protein sequence ID" value="ACK48434.1"/>
    <property type="molecule type" value="Genomic_DNA"/>
</dbReference>
<dbReference type="RefSeq" id="WP_012588772.1">
    <property type="nucleotide sequence ID" value="NC_011663.1"/>
</dbReference>
<dbReference type="SMR" id="B8E8D7"/>
<dbReference type="KEGG" id="sbp:Sbal223_3961"/>
<dbReference type="HOGENOM" id="CLU_010245_4_1_6"/>
<dbReference type="Proteomes" id="UP000002507">
    <property type="component" value="Chromosome"/>
</dbReference>
<dbReference type="GO" id="GO:0070733">
    <property type="term" value="F:AMPylase activity"/>
    <property type="evidence" value="ECO:0007669"/>
    <property type="project" value="RHEA"/>
</dbReference>
<dbReference type="GO" id="GO:0005524">
    <property type="term" value="F:ATP binding"/>
    <property type="evidence" value="ECO:0007669"/>
    <property type="project" value="UniProtKB-UniRule"/>
</dbReference>
<dbReference type="GO" id="GO:0000287">
    <property type="term" value="F:magnesium ion binding"/>
    <property type="evidence" value="ECO:0007669"/>
    <property type="project" value="UniProtKB-UniRule"/>
</dbReference>
<dbReference type="HAMAP" id="MF_00692">
    <property type="entry name" value="YdiU_SelO"/>
    <property type="match status" value="1"/>
</dbReference>
<dbReference type="InterPro" id="IPR003846">
    <property type="entry name" value="SelO"/>
</dbReference>
<dbReference type="NCBIfam" id="NF000658">
    <property type="entry name" value="PRK00029.1"/>
    <property type="match status" value="1"/>
</dbReference>
<dbReference type="PANTHER" id="PTHR32057">
    <property type="entry name" value="PROTEIN ADENYLYLTRANSFERASE SELO, MITOCHONDRIAL"/>
    <property type="match status" value="1"/>
</dbReference>
<dbReference type="PANTHER" id="PTHR32057:SF14">
    <property type="entry name" value="PROTEIN ADENYLYLTRANSFERASE SELO, MITOCHONDRIAL"/>
    <property type="match status" value="1"/>
</dbReference>
<dbReference type="Pfam" id="PF02696">
    <property type="entry name" value="SelO"/>
    <property type="match status" value="1"/>
</dbReference>
<feature type="chain" id="PRO_1000200066" description="Protein nucleotidyltransferase YdiU">
    <location>
        <begin position="1"/>
        <end position="484"/>
    </location>
</feature>
<feature type="active site" description="Proton acceptor" evidence="1">
    <location>
        <position position="244"/>
    </location>
</feature>
<feature type="binding site" evidence="1">
    <location>
        <position position="81"/>
    </location>
    <ligand>
        <name>ATP</name>
        <dbReference type="ChEBI" id="CHEBI:30616"/>
    </ligand>
</feature>
<feature type="binding site" evidence="1">
    <location>
        <position position="83"/>
    </location>
    <ligand>
        <name>ATP</name>
        <dbReference type="ChEBI" id="CHEBI:30616"/>
    </ligand>
</feature>
<feature type="binding site" evidence="1">
    <location>
        <position position="84"/>
    </location>
    <ligand>
        <name>ATP</name>
        <dbReference type="ChEBI" id="CHEBI:30616"/>
    </ligand>
</feature>
<feature type="binding site" evidence="1">
    <location>
        <position position="103"/>
    </location>
    <ligand>
        <name>ATP</name>
        <dbReference type="ChEBI" id="CHEBI:30616"/>
    </ligand>
</feature>
<feature type="binding site" evidence="1">
    <location>
        <position position="115"/>
    </location>
    <ligand>
        <name>ATP</name>
        <dbReference type="ChEBI" id="CHEBI:30616"/>
    </ligand>
</feature>
<feature type="binding site" evidence="1">
    <location>
        <position position="116"/>
    </location>
    <ligand>
        <name>ATP</name>
        <dbReference type="ChEBI" id="CHEBI:30616"/>
    </ligand>
</feature>
<feature type="binding site" evidence="1">
    <location>
        <position position="166"/>
    </location>
    <ligand>
        <name>ATP</name>
        <dbReference type="ChEBI" id="CHEBI:30616"/>
    </ligand>
</feature>
<feature type="binding site" evidence="1">
    <location>
        <position position="173"/>
    </location>
    <ligand>
        <name>ATP</name>
        <dbReference type="ChEBI" id="CHEBI:30616"/>
    </ligand>
</feature>
<feature type="binding site" evidence="1">
    <location>
        <position position="245"/>
    </location>
    <ligand>
        <name>Mg(2+)</name>
        <dbReference type="ChEBI" id="CHEBI:18420"/>
    </ligand>
</feature>
<feature type="binding site" evidence="1">
    <location>
        <position position="254"/>
    </location>
    <ligand>
        <name>ATP</name>
        <dbReference type="ChEBI" id="CHEBI:30616"/>
    </ligand>
</feature>
<feature type="binding site" evidence="1">
    <location>
        <position position="254"/>
    </location>
    <ligand>
        <name>Mg(2+)</name>
        <dbReference type="ChEBI" id="CHEBI:18420"/>
    </ligand>
</feature>
<organism>
    <name type="scientific">Shewanella baltica (strain OS223)</name>
    <dbReference type="NCBI Taxonomy" id="407976"/>
    <lineage>
        <taxon>Bacteria</taxon>
        <taxon>Pseudomonadati</taxon>
        <taxon>Pseudomonadota</taxon>
        <taxon>Gammaproteobacteria</taxon>
        <taxon>Alteromonadales</taxon>
        <taxon>Shewanellaceae</taxon>
        <taxon>Shewanella</taxon>
    </lineage>
</organism>
<keyword id="KW-0067">ATP-binding</keyword>
<keyword id="KW-0460">Magnesium</keyword>
<keyword id="KW-0464">Manganese</keyword>
<keyword id="KW-0479">Metal-binding</keyword>
<keyword id="KW-0547">Nucleotide-binding</keyword>
<keyword id="KW-0548">Nucleotidyltransferase</keyword>
<keyword id="KW-0808">Transferase</keyword>
<reference key="1">
    <citation type="submission" date="2008-12" db="EMBL/GenBank/DDBJ databases">
        <title>Complete sequence of chromosome of Shewanella baltica OS223.</title>
        <authorList>
            <consortium name="US DOE Joint Genome Institute"/>
            <person name="Lucas S."/>
            <person name="Copeland A."/>
            <person name="Lapidus A."/>
            <person name="Glavina del Rio T."/>
            <person name="Dalin E."/>
            <person name="Tice H."/>
            <person name="Bruce D."/>
            <person name="Goodwin L."/>
            <person name="Pitluck S."/>
            <person name="Chertkov O."/>
            <person name="Meincke L."/>
            <person name="Brettin T."/>
            <person name="Detter J.C."/>
            <person name="Han C."/>
            <person name="Kuske C.R."/>
            <person name="Larimer F."/>
            <person name="Land M."/>
            <person name="Hauser L."/>
            <person name="Kyrpides N."/>
            <person name="Ovchinnikova G."/>
            <person name="Brettar I."/>
            <person name="Rodrigues J."/>
            <person name="Konstantinidis K."/>
            <person name="Tiedje J."/>
        </authorList>
    </citation>
    <scope>NUCLEOTIDE SEQUENCE [LARGE SCALE GENOMIC DNA]</scope>
    <source>
        <strain>OS223</strain>
    </source>
</reference>
<evidence type="ECO:0000255" key="1">
    <source>
        <dbReference type="HAMAP-Rule" id="MF_00692"/>
    </source>
</evidence>
<accession>B8E8D7</accession>
<gene>
    <name evidence="1" type="primary">ydiU</name>
    <name evidence="1" type="synonym">selO</name>
    <name type="ordered locus">Sbal223_3961</name>
</gene>